<evidence type="ECO:0000255" key="1">
    <source>
        <dbReference type="HAMAP-Rule" id="MF_01031"/>
    </source>
</evidence>
<protein>
    <recommendedName>
        <fullName evidence="1">3-isopropylmalate dehydratase small subunit</fullName>
        <ecNumber evidence="1">4.2.1.33</ecNumber>
    </recommendedName>
    <alternativeName>
        <fullName evidence="1">Alpha-IPM isomerase</fullName>
        <shortName evidence="1">IPMI</shortName>
    </alternativeName>
    <alternativeName>
        <fullName evidence="1">Isopropylmalate isomerase</fullName>
    </alternativeName>
</protein>
<name>LEUD_PSYA2</name>
<comment type="function">
    <text evidence="1">Catalyzes the isomerization between 2-isopropylmalate and 3-isopropylmalate, via the formation of 2-isopropylmaleate.</text>
</comment>
<comment type="catalytic activity">
    <reaction evidence="1">
        <text>(2R,3S)-3-isopropylmalate = (2S)-2-isopropylmalate</text>
        <dbReference type="Rhea" id="RHEA:32287"/>
        <dbReference type="ChEBI" id="CHEBI:1178"/>
        <dbReference type="ChEBI" id="CHEBI:35121"/>
        <dbReference type="EC" id="4.2.1.33"/>
    </reaction>
</comment>
<comment type="pathway">
    <text evidence="1">Amino-acid biosynthesis; L-leucine biosynthesis; L-leucine from 3-methyl-2-oxobutanoate: step 2/4.</text>
</comment>
<comment type="subunit">
    <text evidence="1">Heterodimer of LeuC and LeuD.</text>
</comment>
<comment type="similarity">
    <text evidence="1">Belongs to the LeuD family. LeuD type 1 subfamily.</text>
</comment>
<organism>
    <name type="scientific">Psychrobacter arcticus (strain DSM 17307 / VKM B-2377 / 273-4)</name>
    <dbReference type="NCBI Taxonomy" id="259536"/>
    <lineage>
        <taxon>Bacteria</taxon>
        <taxon>Pseudomonadati</taxon>
        <taxon>Pseudomonadota</taxon>
        <taxon>Gammaproteobacteria</taxon>
        <taxon>Moraxellales</taxon>
        <taxon>Moraxellaceae</taxon>
        <taxon>Psychrobacter</taxon>
    </lineage>
</organism>
<keyword id="KW-0028">Amino-acid biosynthesis</keyword>
<keyword id="KW-0100">Branched-chain amino acid biosynthesis</keyword>
<keyword id="KW-0432">Leucine biosynthesis</keyword>
<keyword id="KW-0456">Lyase</keyword>
<keyword id="KW-1185">Reference proteome</keyword>
<dbReference type="EC" id="4.2.1.33" evidence="1"/>
<dbReference type="EMBL" id="CP000082">
    <property type="protein sequence ID" value="AAZ19260.1"/>
    <property type="molecule type" value="Genomic_DNA"/>
</dbReference>
<dbReference type="RefSeq" id="WP_011280681.1">
    <property type="nucleotide sequence ID" value="NC_007204.1"/>
</dbReference>
<dbReference type="SMR" id="Q4FRU8"/>
<dbReference type="STRING" id="259536.Psyc_1412"/>
<dbReference type="KEGG" id="par:Psyc_1412"/>
<dbReference type="eggNOG" id="COG0066">
    <property type="taxonomic scope" value="Bacteria"/>
</dbReference>
<dbReference type="HOGENOM" id="CLU_081378_0_3_6"/>
<dbReference type="OrthoDB" id="9777465at2"/>
<dbReference type="UniPathway" id="UPA00048">
    <property type="reaction ID" value="UER00071"/>
</dbReference>
<dbReference type="Proteomes" id="UP000000546">
    <property type="component" value="Chromosome"/>
</dbReference>
<dbReference type="GO" id="GO:0009316">
    <property type="term" value="C:3-isopropylmalate dehydratase complex"/>
    <property type="evidence" value="ECO:0007669"/>
    <property type="project" value="InterPro"/>
</dbReference>
<dbReference type="GO" id="GO:0003861">
    <property type="term" value="F:3-isopropylmalate dehydratase activity"/>
    <property type="evidence" value="ECO:0007669"/>
    <property type="project" value="UniProtKB-UniRule"/>
</dbReference>
<dbReference type="GO" id="GO:0009098">
    <property type="term" value="P:L-leucine biosynthetic process"/>
    <property type="evidence" value="ECO:0007669"/>
    <property type="project" value="UniProtKB-UniRule"/>
</dbReference>
<dbReference type="CDD" id="cd01577">
    <property type="entry name" value="IPMI_Swivel"/>
    <property type="match status" value="1"/>
</dbReference>
<dbReference type="FunFam" id="3.20.19.10:FF:000003">
    <property type="entry name" value="3-isopropylmalate dehydratase small subunit"/>
    <property type="match status" value="1"/>
</dbReference>
<dbReference type="Gene3D" id="3.20.19.10">
    <property type="entry name" value="Aconitase, domain 4"/>
    <property type="match status" value="1"/>
</dbReference>
<dbReference type="HAMAP" id="MF_01031">
    <property type="entry name" value="LeuD_type1"/>
    <property type="match status" value="1"/>
</dbReference>
<dbReference type="InterPro" id="IPR004431">
    <property type="entry name" value="3-IsopropMal_deHydase_ssu"/>
</dbReference>
<dbReference type="InterPro" id="IPR015928">
    <property type="entry name" value="Aconitase/3IPM_dehydase_swvl"/>
</dbReference>
<dbReference type="InterPro" id="IPR000573">
    <property type="entry name" value="AconitaseA/IPMdHydase_ssu_swvl"/>
</dbReference>
<dbReference type="InterPro" id="IPR033940">
    <property type="entry name" value="IPMI_Swivel"/>
</dbReference>
<dbReference type="InterPro" id="IPR050075">
    <property type="entry name" value="LeuD"/>
</dbReference>
<dbReference type="NCBIfam" id="TIGR00171">
    <property type="entry name" value="leuD"/>
    <property type="match status" value="1"/>
</dbReference>
<dbReference type="NCBIfam" id="NF002458">
    <property type="entry name" value="PRK01641.1"/>
    <property type="match status" value="1"/>
</dbReference>
<dbReference type="PANTHER" id="PTHR43345:SF5">
    <property type="entry name" value="3-ISOPROPYLMALATE DEHYDRATASE SMALL SUBUNIT"/>
    <property type="match status" value="1"/>
</dbReference>
<dbReference type="PANTHER" id="PTHR43345">
    <property type="entry name" value="3-ISOPROPYLMALATE DEHYDRATASE SMALL SUBUNIT 2-RELATED-RELATED"/>
    <property type="match status" value="1"/>
</dbReference>
<dbReference type="Pfam" id="PF00694">
    <property type="entry name" value="Aconitase_C"/>
    <property type="match status" value="1"/>
</dbReference>
<dbReference type="SUPFAM" id="SSF52016">
    <property type="entry name" value="LeuD/IlvD-like"/>
    <property type="match status" value="1"/>
</dbReference>
<feature type="chain" id="PRO_0000141863" description="3-isopropylmalate dehydratase small subunit">
    <location>
        <begin position="1"/>
        <end position="216"/>
    </location>
</feature>
<gene>
    <name evidence="1" type="primary">leuD</name>
    <name type="ordered locus">Psyc_1412</name>
</gene>
<sequence length="216" mass="24702">MQAYNTQKGIVCPLDRANVDTDQIIAKQFLKSIKRTGFGVNLFDDWRYLDEGYPGQDNSTRIINPDFILNKPRYQGASILLARRNFGCGSSREHAPWALSEYGFRTVIAPSFADIFYNNCFKNGMLPIVLDEEIVDSLMKATFANEGYELTADLERQVVITPTGEEYAFEVDDFRKHCLLNGLDDIGLTLQQSDAIKDYEQKMMQKTPWIFNEVRA</sequence>
<reference key="1">
    <citation type="journal article" date="2010" name="Appl. Environ. Microbiol.">
        <title>The genome sequence of Psychrobacter arcticus 273-4, a psychroactive Siberian permafrost bacterium, reveals mechanisms for adaptation to low-temperature growth.</title>
        <authorList>
            <person name="Ayala-del-Rio H.L."/>
            <person name="Chain P.S."/>
            <person name="Grzymski J.J."/>
            <person name="Ponder M.A."/>
            <person name="Ivanova N."/>
            <person name="Bergholz P.W."/>
            <person name="Di Bartolo G."/>
            <person name="Hauser L."/>
            <person name="Land M."/>
            <person name="Bakermans C."/>
            <person name="Rodrigues D."/>
            <person name="Klappenbach J."/>
            <person name="Zarka D."/>
            <person name="Larimer F."/>
            <person name="Richardson P."/>
            <person name="Murray A."/>
            <person name="Thomashow M."/>
            <person name="Tiedje J.M."/>
        </authorList>
    </citation>
    <scope>NUCLEOTIDE SEQUENCE [LARGE SCALE GENOMIC DNA]</scope>
    <source>
        <strain>DSM 17307 / VKM B-2377 / 273-4</strain>
    </source>
</reference>
<proteinExistence type="inferred from homology"/>
<accession>Q4FRU8</accession>